<sequence length="343" mass="38377">MRLSDFDFELPEELIAQHPLAQRQASRLMVLNRVTQQLQLAQFADIADWFRPGDVLVVNDTRVIPARLIGRKQTGGRIEVFLVRRLPGVEEVWACLTKCSKSPRPGTRLILGEGLEGTVVEGGEPPYRHVRFSFQGDFSQVLEQVGRIPLPPYIRREATPDDRSRYQTVFAREAGAVAAPTAGLHFTDEILDVLRAKGVEIQPLTLHVGLGTFLPMRTDDITEHRMHEENYFVPEGTAAAVNRAKDDGRRVIALGTTSTRTLEYAVDEQGRLQAGAGTCDLFIRPGFKFRIVDGLVTNFHLPCSTLLVLVAALAGREFILEAYQRAVAEKFRFFSYGDCMLIL</sequence>
<proteinExistence type="inferred from homology"/>
<accession>Q3A3C1</accession>
<dbReference type="EC" id="2.4.99.17" evidence="1"/>
<dbReference type="EMBL" id="CP000142">
    <property type="protein sequence ID" value="ABA89136.1"/>
    <property type="molecule type" value="Genomic_DNA"/>
</dbReference>
<dbReference type="RefSeq" id="WP_011341640.1">
    <property type="nucleotide sequence ID" value="NC_007498.2"/>
</dbReference>
<dbReference type="SMR" id="Q3A3C1"/>
<dbReference type="STRING" id="338963.Pcar_1895"/>
<dbReference type="KEGG" id="pca:Pcar_1895"/>
<dbReference type="eggNOG" id="COG0809">
    <property type="taxonomic scope" value="Bacteria"/>
</dbReference>
<dbReference type="HOGENOM" id="CLU_039110_1_0_7"/>
<dbReference type="OrthoDB" id="9805933at2"/>
<dbReference type="UniPathway" id="UPA00392"/>
<dbReference type="Proteomes" id="UP000002534">
    <property type="component" value="Chromosome"/>
</dbReference>
<dbReference type="GO" id="GO:0005737">
    <property type="term" value="C:cytoplasm"/>
    <property type="evidence" value="ECO:0007669"/>
    <property type="project" value="UniProtKB-SubCell"/>
</dbReference>
<dbReference type="GO" id="GO:0051075">
    <property type="term" value="F:S-adenosylmethionine:tRNA ribosyltransferase-isomerase activity"/>
    <property type="evidence" value="ECO:0007669"/>
    <property type="project" value="UniProtKB-EC"/>
</dbReference>
<dbReference type="GO" id="GO:0008616">
    <property type="term" value="P:queuosine biosynthetic process"/>
    <property type="evidence" value="ECO:0007669"/>
    <property type="project" value="UniProtKB-UniRule"/>
</dbReference>
<dbReference type="GO" id="GO:0002099">
    <property type="term" value="P:tRNA wobble guanine modification"/>
    <property type="evidence" value="ECO:0007669"/>
    <property type="project" value="TreeGrafter"/>
</dbReference>
<dbReference type="FunFam" id="2.40.10.240:FF:000002">
    <property type="entry name" value="S-adenosylmethionine:tRNA ribosyltransferase-isomerase"/>
    <property type="match status" value="1"/>
</dbReference>
<dbReference type="FunFam" id="3.40.1780.10:FF:000001">
    <property type="entry name" value="S-adenosylmethionine:tRNA ribosyltransferase-isomerase"/>
    <property type="match status" value="1"/>
</dbReference>
<dbReference type="Gene3D" id="2.40.10.240">
    <property type="entry name" value="QueA-like"/>
    <property type="match status" value="1"/>
</dbReference>
<dbReference type="Gene3D" id="3.40.1780.10">
    <property type="entry name" value="QueA-like"/>
    <property type="match status" value="1"/>
</dbReference>
<dbReference type="HAMAP" id="MF_00113">
    <property type="entry name" value="QueA"/>
    <property type="match status" value="1"/>
</dbReference>
<dbReference type="InterPro" id="IPR003699">
    <property type="entry name" value="QueA"/>
</dbReference>
<dbReference type="InterPro" id="IPR042118">
    <property type="entry name" value="QueA_dom1"/>
</dbReference>
<dbReference type="InterPro" id="IPR042119">
    <property type="entry name" value="QueA_dom2"/>
</dbReference>
<dbReference type="InterPro" id="IPR036100">
    <property type="entry name" value="QueA_sf"/>
</dbReference>
<dbReference type="NCBIfam" id="NF001140">
    <property type="entry name" value="PRK00147.1"/>
    <property type="match status" value="1"/>
</dbReference>
<dbReference type="NCBIfam" id="TIGR00113">
    <property type="entry name" value="queA"/>
    <property type="match status" value="1"/>
</dbReference>
<dbReference type="PANTHER" id="PTHR30307">
    <property type="entry name" value="S-ADENOSYLMETHIONINE:TRNA RIBOSYLTRANSFERASE-ISOMERASE"/>
    <property type="match status" value="1"/>
</dbReference>
<dbReference type="PANTHER" id="PTHR30307:SF0">
    <property type="entry name" value="S-ADENOSYLMETHIONINE:TRNA RIBOSYLTRANSFERASE-ISOMERASE"/>
    <property type="match status" value="1"/>
</dbReference>
<dbReference type="Pfam" id="PF02547">
    <property type="entry name" value="Queuosine_synth"/>
    <property type="match status" value="1"/>
</dbReference>
<dbReference type="SUPFAM" id="SSF111337">
    <property type="entry name" value="QueA-like"/>
    <property type="match status" value="1"/>
</dbReference>
<name>QUEA_SYNC1</name>
<protein>
    <recommendedName>
        <fullName evidence="1">S-adenosylmethionine:tRNA ribosyltransferase-isomerase</fullName>
        <ecNumber evidence="1">2.4.99.17</ecNumber>
    </recommendedName>
    <alternativeName>
        <fullName evidence="1">Queuosine biosynthesis protein QueA</fullName>
    </alternativeName>
</protein>
<keyword id="KW-0963">Cytoplasm</keyword>
<keyword id="KW-0671">Queuosine biosynthesis</keyword>
<keyword id="KW-1185">Reference proteome</keyword>
<keyword id="KW-0949">S-adenosyl-L-methionine</keyword>
<keyword id="KW-0808">Transferase</keyword>
<reference key="1">
    <citation type="submission" date="2005-10" db="EMBL/GenBank/DDBJ databases">
        <title>Complete sequence of Pelobacter carbinolicus DSM 2380.</title>
        <authorList>
            <person name="Copeland A."/>
            <person name="Lucas S."/>
            <person name="Lapidus A."/>
            <person name="Barry K."/>
            <person name="Detter J.C."/>
            <person name="Glavina T."/>
            <person name="Hammon N."/>
            <person name="Israni S."/>
            <person name="Pitluck S."/>
            <person name="Chertkov O."/>
            <person name="Schmutz J."/>
            <person name="Larimer F."/>
            <person name="Land M."/>
            <person name="Kyrpides N."/>
            <person name="Ivanova N."/>
            <person name="Richardson P."/>
        </authorList>
    </citation>
    <scope>NUCLEOTIDE SEQUENCE [LARGE SCALE GENOMIC DNA]</scope>
    <source>
        <strain>DSM 2380 / NBRC 103641 / GraBd1</strain>
    </source>
</reference>
<feature type="chain" id="PRO_0000231354" description="S-adenosylmethionine:tRNA ribosyltransferase-isomerase">
    <location>
        <begin position="1"/>
        <end position="343"/>
    </location>
</feature>
<gene>
    <name evidence="1" type="primary">queA</name>
    <name type="ordered locus">Pcar_1895</name>
</gene>
<evidence type="ECO:0000255" key="1">
    <source>
        <dbReference type="HAMAP-Rule" id="MF_00113"/>
    </source>
</evidence>
<comment type="function">
    <text evidence="1">Transfers and isomerizes the ribose moiety from AdoMet to the 7-aminomethyl group of 7-deazaguanine (preQ1-tRNA) to give epoxyqueuosine (oQ-tRNA).</text>
</comment>
<comment type="catalytic activity">
    <reaction evidence="1">
        <text>7-aminomethyl-7-carbaguanosine(34) in tRNA + S-adenosyl-L-methionine = epoxyqueuosine(34) in tRNA + adenine + L-methionine + 2 H(+)</text>
        <dbReference type="Rhea" id="RHEA:32155"/>
        <dbReference type="Rhea" id="RHEA-COMP:10342"/>
        <dbReference type="Rhea" id="RHEA-COMP:18582"/>
        <dbReference type="ChEBI" id="CHEBI:15378"/>
        <dbReference type="ChEBI" id="CHEBI:16708"/>
        <dbReference type="ChEBI" id="CHEBI:57844"/>
        <dbReference type="ChEBI" id="CHEBI:59789"/>
        <dbReference type="ChEBI" id="CHEBI:82833"/>
        <dbReference type="ChEBI" id="CHEBI:194443"/>
        <dbReference type="EC" id="2.4.99.17"/>
    </reaction>
</comment>
<comment type="pathway">
    <text evidence="1">tRNA modification; tRNA-queuosine biosynthesis.</text>
</comment>
<comment type="subunit">
    <text evidence="1">Monomer.</text>
</comment>
<comment type="subcellular location">
    <subcellularLocation>
        <location evidence="1">Cytoplasm</location>
    </subcellularLocation>
</comment>
<comment type="similarity">
    <text evidence="1">Belongs to the QueA family.</text>
</comment>
<organism>
    <name type="scientific">Syntrophotalea carbinolica (strain DSM 2380 / NBRC 103641 / GraBd1)</name>
    <name type="common">Pelobacter carbinolicus</name>
    <dbReference type="NCBI Taxonomy" id="338963"/>
    <lineage>
        <taxon>Bacteria</taxon>
        <taxon>Pseudomonadati</taxon>
        <taxon>Thermodesulfobacteriota</taxon>
        <taxon>Desulfuromonadia</taxon>
        <taxon>Desulfuromonadales</taxon>
        <taxon>Syntrophotaleaceae</taxon>
        <taxon>Syntrophotalea</taxon>
    </lineage>
</organism>